<sequence length="96" mass="10253">MNIRPLHDRVIVERQEVESKSAGGIVLTGSAAEKSTRGTVLAVGKGRILENGTVQPLDVKVGDSVIFAEGYGTKSEKIDGKEVLIMSENDIMAIVE</sequence>
<feature type="chain" id="PRO_1000129723" description="Co-chaperonin GroES">
    <location>
        <begin position="1"/>
        <end position="96"/>
    </location>
</feature>
<proteinExistence type="inferred from homology"/>
<name>CH10_ALIFM</name>
<accession>B5FFX9</accession>
<evidence type="ECO:0000255" key="1">
    <source>
        <dbReference type="HAMAP-Rule" id="MF_00580"/>
    </source>
</evidence>
<protein>
    <recommendedName>
        <fullName evidence="1">Co-chaperonin GroES</fullName>
    </recommendedName>
    <alternativeName>
        <fullName evidence="1">10 kDa chaperonin</fullName>
    </alternativeName>
    <alternativeName>
        <fullName evidence="1">Chaperonin-10</fullName>
        <shortName evidence="1">Cpn10</shortName>
    </alternativeName>
</protein>
<keyword id="KW-0143">Chaperone</keyword>
<keyword id="KW-0963">Cytoplasm</keyword>
<comment type="function">
    <text evidence="1">Together with the chaperonin GroEL, plays an essential role in assisting protein folding. The GroEL-GroES system forms a nano-cage that allows encapsulation of the non-native substrate proteins and provides a physical environment optimized to promote and accelerate protein folding. GroES binds to the apical surface of the GroEL ring, thereby capping the opening of the GroEL channel.</text>
</comment>
<comment type="subunit">
    <text evidence="1">Heptamer of 7 subunits arranged in a ring. Interacts with the chaperonin GroEL.</text>
</comment>
<comment type="subcellular location">
    <subcellularLocation>
        <location evidence="1">Cytoplasm</location>
    </subcellularLocation>
</comment>
<comment type="similarity">
    <text evidence="1">Belongs to the GroES chaperonin family.</text>
</comment>
<organism>
    <name type="scientific">Aliivibrio fischeri (strain MJ11)</name>
    <name type="common">Vibrio fischeri</name>
    <dbReference type="NCBI Taxonomy" id="388396"/>
    <lineage>
        <taxon>Bacteria</taxon>
        <taxon>Pseudomonadati</taxon>
        <taxon>Pseudomonadota</taxon>
        <taxon>Gammaproteobacteria</taxon>
        <taxon>Vibrionales</taxon>
        <taxon>Vibrionaceae</taxon>
        <taxon>Aliivibrio</taxon>
    </lineage>
</organism>
<reference key="1">
    <citation type="submission" date="2008-08" db="EMBL/GenBank/DDBJ databases">
        <title>Complete sequence of Vibrio fischeri strain MJ11.</title>
        <authorList>
            <person name="Mandel M.J."/>
            <person name="Stabb E.V."/>
            <person name="Ruby E.G."/>
            <person name="Ferriera S."/>
            <person name="Johnson J."/>
            <person name="Kravitz S."/>
            <person name="Beeson K."/>
            <person name="Sutton G."/>
            <person name="Rogers Y.-H."/>
            <person name="Friedman R."/>
            <person name="Frazier M."/>
            <person name="Venter J.C."/>
        </authorList>
    </citation>
    <scope>NUCLEOTIDE SEQUENCE [LARGE SCALE GENOMIC DNA]</scope>
    <source>
        <strain>MJ11</strain>
    </source>
</reference>
<gene>
    <name evidence="1" type="primary">groES</name>
    <name evidence="1" type="synonym">groS</name>
    <name type="ordered locus">VFMJ11_0195</name>
</gene>
<dbReference type="EMBL" id="CP001139">
    <property type="protein sequence ID" value="ACH64841.1"/>
    <property type="molecule type" value="Genomic_DNA"/>
</dbReference>
<dbReference type="RefSeq" id="WP_005417156.1">
    <property type="nucleotide sequence ID" value="NC_011184.1"/>
</dbReference>
<dbReference type="SMR" id="B5FFX9"/>
<dbReference type="GeneID" id="54162828"/>
<dbReference type="KEGG" id="vfm:VFMJ11_0195"/>
<dbReference type="HOGENOM" id="CLU_132825_1_1_6"/>
<dbReference type="Proteomes" id="UP000001857">
    <property type="component" value="Chromosome I"/>
</dbReference>
<dbReference type="GO" id="GO:0005737">
    <property type="term" value="C:cytoplasm"/>
    <property type="evidence" value="ECO:0007669"/>
    <property type="project" value="UniProtKB-SubCell"/>
</dbReference>
<dbReference type="GO" id="GO:0005524">
    <property type="term" value="F:ATP binding"/>
    <property type="evidence" value="ECO:0007669"/>
    <property type="project" value="InterPro"/>
</dbReference>
<dbReference type="GO" id="GO:0046872">
    <property type="term" value="F:metal ion binding"/>
    <property type="evidence" value="ECO:0007669"/>
    <property type="project" value="TreeGrafter"/>
</dbReference>
<dbReference type="GO" id="GO:0044183">
    <property type="term" value="F:protein folding chaperone"/>
    <property type="evidence" value="ECO:0007669"/>
    <property type="project" value="InterPro"/>
</dbReference>
<dbReference type="GO" id="GO:0051087">
    <property type="term" value="F:protein-folding chaperone binding"/>
    <property type="evidence" value="ECO:0007669"/>
    <property type="project" value="TreeGrafter"/>
</dbReference>
<dbReference type="GO" id="GO:0051082">
    <property type="term" value="F:unfolded protein binding"/>
    <property type="evidence" value="ECO:0007669"/>
    <property type="project" value="TreeGrafter"/>
</dbReference>
<dbReference type="GO" id="GO:0051085">
    <property type="term" value="P:chaperone cofactor-dependent protein refolding"/>
    <property type="evidence" value="ECO:0007669"/>
    <property type="project" value="TreeGrafter"/>
</dbReference>
<dbReference type="CDD" id="cd00320">
    <property type="entry name" value="cpn10"/>
    <property type="match status" value="1"/>
</dbReference>
<dbReference type="FunFam" id="2.30.33.40:FF:000001">
    <property type="entry name" value="10 kDa chaperonin"/>
    <property type="match status" value="1"/>
</dbReference>
<dbReference type="Gene3D" id="2.30.33.40">
    <property type="entry name" value="GroES chaperonin"/>
    <property type="match status" value="1"/>
</dbReference>
<dbReference type="HAMAP" id="MF_00580">
    <property type="entry name" value="CH10"/>
    <property type="match status" value="1"/>
</dbReference>
<dbReference type="InterPro" id="IPR020818">
    <property type="entry name" value="Chaperonin_GroES"/>
</dbReference>
<dbReference type="InterPro" id="IPR037124">
    <property type="entry name" value="Chaperonin_GroES_sf"/>
</dbReference>
<dbReference type="InterPro" id="IPR018369">
    <property type="entry name" value="Chaprnonin_Cpn10_CS"/>
</dbReference>
<dbReference type="InterPro" id="IPR011032">
    <property type="entry name" value="GroES-like_sf"/>
</dbReference>
<dbReference type="NCBIfam" id="NF001526">
    <property type="entry name" value="PRK00364.1-1"/>
    <property type="match status" value="1"/>
</dbReference>
<dbReference type="NCBIfam" id="NF001527">
    <property type="entry name" value="PRK00364.1-2"/>
    <property type="match status" value="1"/>
</dbReference>
<dbReference type="NCBIfam" id="NF001531">
    <property type="entry name" value="PRK00364.2-2"/>
    <property type="match status" value="1"/>
</dbReference>
<dbReference type="PANTHER" id="PTHR10772">
    <property type="entry name" value="10 KDA HEAT SHOCK PROTEIN"/>
    <property type="match status" value="1"/>
</dbReference>
<dbReference type="PANTHER" id="PTHR10772:SF58">
    <property type="entry name" value="CO-CHAPERONIN GROES"/>
    <property type="match status" value="1"/>
</dbReference>
<dbReference type="Pfam" id="PF00166">
    <property type="entry name" value="Cpn10"/>
    <property type="match status" value="1"/>
</dbReference>
<dbReference type="PRINTS" id="PR00297">
    <property type="entry name" value="CHAPERONIN10"/>
</dbReference>
<dbReference type="SMART" id="SM00883">
    <property type="entry name" value="Cpn10"/>
    <property type="match status" value="1"/>
</dbReference>
<dbReference type="SUPFAM" id="SSF50129">
    <property type="entry name" value="GroES-like"/>
    <property type="match status" value="1"/>
</dbReference>
<dbReference type="PROSITE" id="PS00681">
    <property type="entry name" value="CHAPERONINS_CPN10"/>
    <property type="match status" value="1"/>
</dbReference>